<gene>
    <name evidence="1" type="primary">glmM</name>
    <name type="ordered locus">Cthe_1163</name>
</gene>
<sequence length="449" mass="48775">MGRLFGTDGVRGVANLELTAELAYKLGQAGAYVLTSETKHTPKILVGMDTRISGDMLEASLVAGLCSVGAEVACLGIAPTPTVAYLTRYYNADAGVVISASHNPYEFNGIKFFNSKGYKLSDALEERIESIILDNSEKIQLPTGEKIGRKIEIESPLDDYVNFIKSTIKGDLKGLKVAIDCANGASYQVAPVTFFELGADVCVINNEPDGVNINKDCGSTHIEQLQKFVIESGADVGLAFDGDADRVLAVDENGNMVDGDQIMAIIGLELKKQGKLTNNTIVATVMSNLGLDIMAKREGINIVKTKVGDRYVLENMLENGHVLGGEQSGHIIFLEHSTTGDGILTGAQLLNVVKSSGKKLSELASIMQVLPQVLMNARVSNQNKEKYLEDEVICEMCKELENEFRDEGRVLIRPSGTEPLVRVMIEGKDRDYIEKRALELVKVIEERLG</sequence>
<protein>
    <recommendedName>
        <fullName evidence="1">Phosphoglucosamine mutase</fullName>
        <ecNumber evidence="1">5.4.2.10</ecNumber>
    </recommendedName>
</protein>
<keyword id="KW-0413">Isomerase</keyword>
<keyword id="KW-0460">Magnesium</keyword>
<keyword id="KW-0479">Metal-binding</keyword>
<keyword id="KW-0597">Phosphoprotein</keyword>
<keyword id="KW-1185">Reference proteome</keyword>
<comment type="function">
    <text evidence="1">Catalyzes the conversion of glucosamine-6-phosphate to glucosamine-1-phosphate.</text>
</comment>
<comment type="catalytic activity">
    <reaction evidence="1">
        <text>alpha-D-glucosamine 1-phosphate = D-glucosamine 6-phosphate</text>
        <dbReference type="Rhea" id="RHEA:23424"/>
        <dbReference type="ChEBI" id="CHEBI:58516"/>
        <dbReference type="ChEBI" id="CHEBI:58725"/>
        <dbReference type="EC" id="5.4.2.10"/>
    </reaction>
</comment>
<comment type="cofactor">
    <cofactor evidence="1">
        <name>Mg(2+)</name>
        <dbReference type="ChEBI" id="CHEBI:18420"/>
    </cofactor>
    <text evidence="1">Binds 1 Mg(2+) ion per subunit.</text>
</comment>
<comment type="PTM">
    <text evidence="1">Activated by phosphorylation.</text>
</comment>
<comment type="similarity">
    <text evidence="1">Belongs to the phosphohexose mutase family.</text>
</comment>
<reference key="1">
    <citation type="submission" date="2007-02" db="EMBL/GenBank/DDBJ databases">
        <title>Complete sequence of Clostridium thermocellum ATCC 27405.</title>
        <authorList>
            <consortium name="US DOE Joint Genome Institute"/>
            <person name="Copeland A."/>
            <person name="Lucas S."/>
            <person name="Lapidus A."/>
            <person name="Barry K."/>
            <person name="Detter J.C."/>
            <person name="Glavina del Rio T."/>
            <person name="Hammon N."/>
            <person name="Israni S."/>
            <person name="Dalin E."/>
            <person name="Tice H."/>
            <person name="Pitluck S."/>
            <person name="Chertkov O."/>
            <person name="Brettin T."/>
            <person name="Bruce D."/>
            <person name="Han C."/>
            <person name="Tapia R."/>
            <person name="Gilna P."/>
            <person name="Schmutz J."/>
            <person name="Larimer F."/>
            <person name="Land M."/>
            <person name="Hauser L."/>
            <person name="Kyrpides N."/>
            <person name="Mikhailova N."/>
            <person name="Wu J.H.D."/>
            <person name="Newcomb M."/>
            <person name="Richardson P."/>
        </authorList>
    </citation>
    <scope>NUCLEOTIDE SEQUENCE [LARGE SCALE GENOMIC DNA]</scope>
    <source>
        <strain>ATCC 27405 / DSM 1237 / JCM 9322 / NBRC 103400 / NCIMB 10682 / NRRL B-4536 / VPI 7372</strain>
    </source>
</reference>
<accession>A3DEL6</accession>
<feature type="chain" id="PRO_0000301304" description="Phosphoglucosamine mutase">
    <location>
        <begin position="1"/>
        <end position="449"/>
    </location>
</feature>
<feature type="active site" description="Phosphoserine intermediate" evidence="1">
    <location>
        <position position="101"/>
    </location>
</feature>
<feature type="binding site" description="via phosphate group" evidence="1">
    <location>
        <position position="101"/>
    </location>
    <ligand>
        <name>Mg(2+)</name>
        <dbReference type="ChEBI" id="CHEBI:18420"/>
    </ligand>
</feature>
<feature type="binding site" evidence="1">
    <location>
        <position position="241"/>
    </location>
    <ligand>
        <name>Mg(2+)</name>
        <dbReference type="ChEBI" id="CHEBI:18420"/>
    </ligand>
</feature>
<feature type="binding site" evidence="1">
    <location>
        <position position="243"/>
    </location>
    <ligand>
        <name>Mg(2+)</name>
        <dbReference type="ChEBI" id="CHEBI:18420"/>
    </ligand>
</feature>
<feature type="binding site" evidence="1">
    <location>
        <position position="245"/>
    </location>
    <ligand>
        <name>Mg(2+)</name>
        <dbReference type="ChEBI" id="CHEBI:18420"/>
    </ligand>
</feature>
<feature type="modified residue" description="Phosphoserine" evidence="1">
    <location>
        <position position="101"/>
    </location>
</feature>
<organism>
    <name type="scientific">Acetivibrio thermocellus (strain ATCC 27405 / DSM 1237 / JCM 9322 / NBRC 103400 / NCIMB 10682 / NRRL B-4536 / VPI 7372)</name>
    <name type="common">Clostridium thermocellum</name>
    <dbReference type="NCBI Taxonomy" id="203119"/>
    <lineage>
        <taxon>Bacteria</taxon>
        <taxon>Bacillati</taxon>
        <taxon>Bacillota</taxon>
        <taxon>Clostridia</taxon>
        <taxon>Eubacteriales</taxon>
        <taxon>Oscillospiraceae</taxon>
        <taxon>Acetivibrio</taxon>
    </lineage>
</organism>
<name>GLMM_ACET2</name>
<evidence type="ECO:0000255" key="1">
    <source>
        <dbReference type="HAMAP-Rule" id="MF_01554"/>
    </source>
</evidence>
<proteinExistence type="inferred from homology"/>
<dbReference type="EC" id="5.4.2.10" evidence="1"/>
<dbReference type="EMBL" id="CP000568">
    <property type="protein sequence ID" value="ABN52395.1"/>
    <property type="molecule type" value="Genomic_DNA"/>
</dbReference>
<dbReference type="RefSeq" id="WP_003519133.1">
    <property type="nucleotide sequence ID" value="NC_009012.1"/>
</dbReference>
<dbReference type="SMR" id="A3DEL6"/>
<dbReference type="STRING" id="203119.Cthe_1163"/>
<dbReference type="GeneID" id="35803408"/>
<dbReference type="KEGG" id="cth:Cthe_1163"/>
<dbReference type="eggNOG" id="COG1109">
    <property type="taxonomic scope" value="Bacteria"/>
</dbReference>
<dbReference type="HOGENOM" id="CLU_016950_7_0_9"/>
<dbReference type="OrthoDB" id="9806956at2"/>
<dbReference type="Proteomes" id="UP000002145">
    <property type="component" value="Chromosome"/>
</dbReference>
<dbReference type="GO" id="GO:0005829">
    <property type="term" value="C:cytosol"/>
    <property type="evidence" value="ECO:0007669"/>
    <property type="project" value="TreeGrafter"/>
</dbReference>
<dbReference type="GO" id="GO:0000287">
    <property type="term" value="F:magnesium ion binding"/>
    <property type="evidence" value="ECO:0007669"/>
    <property type="project" value="UniProtKB-UniRule"/>
</dbReference>
<dbReference type="GO" id="GO:0008966">
    <property type="term" value="F:phosphoglucosamine mutase activity"/>
    <property type="evidence" value="ECO:0007669"/>
    <property type="project" value="UniProtKB-UniRule"/>
</dbReference>
<dbReference type="GO" id="GO:0004615">
    <property type="term" value="F:phosphomannomutase activity"/>
    <property type="evidence" value="ECO:0007669"/>
    <property type="project" value="TreeGrafter"/>
</dbReference>
<dbReference type="GO" id="GO:0005975">
    <property type="term" value="P:carbohydrate metabolic process"/>
    <property type="evidence" value="ECO:0007669"/>
    <property type="project" value="InterPro"/>
</dbReference>
<dbReference type="GO" id="GO:0009252">
    <property type="term" value="P:peptidoglycan biosynthetic process"/>
    <property type="evidence" value="ECO:0007669"/>
    <property type="project" value="TreeGrafter"/>
</dbReference>
<dbReference type="GO" id="GO:0006048">
    <property type="term" value="P:UDP-N-acetylglucosamine biosynthetic process"/>
    <property type="evidence" value="ECO:0007669"/>
    <property type="project" value="TreeGrafter"/>
</dbReference>
<dbReference type="CDD" id="cd05802">
    <property type="entry name" value="GlmM"/>
    <property type="match status" value="1"/>
</dbReference>
<dbReference type="FunFam" id="3.30.310.50:FF:000001">
    <property type="entry name" value="Phosphoglucosamine mutase"/>
    <property type="match status" value="1"/>
</dbReference>
<dbReference type="FunFam" id="3.40.120.10:FF:000001">
    <property type="entry name" value="Phosphoglucosamine mutase"/>
    <property type="match status" value="1"/>
</dbReference>
<dbReference type="FunFam" id="3.40.120.10:FF:000002">
    <property type="entry name" value="Phosphoglucosamine mutase"/>
    <property type="match status" value="1"/>
</dbReference>
<dbReference type="Gene3D" id="3.40.120.10">
    <property type="entry name" value="Alpha-D-Glucose-1,6-Bisphosphate, subunit A, domain 3"/>
    <property type="match status" value="3"/>
</dbReference>
<dbReference type="Gene3D" id="3.30.310.50">
    <property type="entry name" value="Alpha-D-phosphohexomutase, C-terminal domain"/>
    <property type="match status" value="1"/>
</dbReference>
<dbReference type="HAMAP" id="MF_01554_B">
    <property type="entry name" value="GlmM_B"/>
    <property type="match status" value="1"/>
</dbReference>
<dbReference type="InterPro" id="IPR005844">
    <property type="entry name" value="A-D-PHexomutase_a/b/a-I"/>
</dbReference>
<dbReference type="InterPro" id="IPR016055">
    <property type="entry name" value="A-D-PHexomutase_a/b/a-I/II/III"/>
</dbReference>
<dbReference type="InterPro" id="IPR005845">
    <property type="entry name" value="A-D-PHexomutase_a/b/a-II"/>
</dbReference>
<dbReference type="InterPro" id="IPR005846">
    <property type="entry name" value="A-D-PHexomutase_a/b/a-III"/>
</dbReference>
<dbReference type="InterPro" id="IPR005843">
    <property type="entry name" value="A-D-PHexomutase_C"/>
</dbReference>
<dbReference type="InterPro" id="IPR036900">
    <property type="entry name" value="A-D-PHexomutase_C_sf"/>
</dbReference>
<dbReference type="InterPro" id="IPR016066">
    <property type="entry name" value="A-D-PHexomutase_CS"/>
</dbReference>
<dbReference type="InterPro" id="IPR005841">
    <property type="entry name" value="Alpha-D-phosphohexomutase_SF"/>
</dbReference>
<dbReference type="InterPro" id="IPR006352">
    <property type="entry name" value="GlmM_bact"/>
</dbReference>
<dbReference type="InterPro" id="IPR050060">
    <property type="entry name" value="Phosphoglucosamine_mutase"/>
</dbReference>
<dbReference type="NCBIfam" id="TIGR01455">
    <property type="entry name" value="glmM"/>
    <property type="match status" value="1"/>
</dbReference>
<dbReference type="NCBIfam" id="NF008139">
    <property type="entry name" value="PRK10887.1"/>
    <property type="match status" value="1"/>
</dbReference>
<dbReference type="PANTHER" id="PTHR42946:SF1">
    <property type="entry name" value="PHOSPHOGLUCOMUTASE (ALPHA-D-GLUCOSE-1,6-BISPHOSPHATE-DEPENDENT)"/>
    <property type="match status" value="1"/>
</dbReference>
<dbReference type="PANTHER" id="PTHR42946">
    <property type="entry name" value="PHOSPHOHEXOSE MUTASE"/>
    <property type="match status" value="1"/>
</dbReference>
<dbReference type="Pfam" id="PF02878">
    <property type="entry name" value="PGM_PMM_I"/>
    <property type="match status" value="1"/>
</dbReference>
<dbReference type="Pfam" id="PF02879">
    <property type="entry name" value="PGM_PMM_II"/>
    <property type="match status" value="1"/>
</dbReference>
<dbReference type="Pfam" id="PF02880">
    <property type="entry name" value="PGM_PMM_III"/>
    <property type="match status" value="1"/>
</dbReference>
<dbReference type="Pfam" id="PF00408">
    <property type="entry name" value="PGM_PMM_IV"/>
    <property type="match status" value="1"/>
</dbReference>
<dbReference type="PRINTS" id="PR00509">
    <property type="entry name" value="PGMPMM"/>
</dbReference>
<dbReference type="SUPFAM" id="SSF55957">
    <property type="entry name" value="Phosphoglucomutase, C-terminal domain"/>
    <property type="match status" value="1"/>
</dbReference>
<dbReference type="SUPFAM" id="SSF53738">
    <property type="entry name" value="Phosphoglucomutase, first 3 domains"/>
    <property type="match status" value="3"/>
</dbReference>
<dbReference type="PROSITE" id="PS00710">
    <property type="entry name" value="PGM_PMM"/>
    <property type="match status" value="1"/>
</dbReference>